<name>RECA_BRUA2</name>
<organism>
    <name type="scientific">Brucella abortus (strain 2308)</name>
    <dbReference type="NCBI Taxonomy" id="359391"/>
    <lineage>
        <taxon>Bacteria</taxon>
        <taxon>Pseudomonadati</taxon>
        <taxon>Pseudomonadota</taxon>
        <taxon>Alphaproteobacteria</taxon>
        <taxon>Hyphomicrobiales</taxon>
        <taxon>Brucellaceae</taxon>
        <taxon>Brucella/Ochrobactrum group</taxon>
        <taxon>Brucella</taxon>
    </lineage>
</organism>
<sequence length="361" mass="38735">MSQNSLRLVEDNSVDKTKALDAALSQIERAFGKGSIMRLGQNDQVVEIETVSTGSLSLDIALGVGGLPKGRIVEIYGPESSGKTTLALHTIAEAQKKGGICAFVDAEHALDPVYARKLGVDLENLLISQPDTGEQALEITDTLVRSGAIDVLVVDSVAALTPRAEIEGEMGDSLPGLQARLMSQALRKLTGSISRSNCMVIFINQIRMKIGVMFGSPETTTGGNALKFYASVRLDIRRIGSIKERDEVVGNQTRVKVVKNKLAPPFKQVEFDIMYGAGVSKVGELVDLGVKAGVVEKSGAWFSYNSQRLGQGRENAKQYLKDNPEVAREIETTLRQNAGLIAEQFLDDGGPEEDAAGAAEM</sequence>
<feature type="chain" id="PRO_1000047893" description="Protein RecA">
    <location>
        <begin position="1"/>
        <end position="361"/>
    </location>
</feature>
<feature type="binding site" evidence="1">
    <location>
        <begin position="77"/>
        <end position="84"/>
    </location>
    <ligand>
        <name>ATP</name>
        <dbReference type="ChEBI" id="CHEBI:30616"/>
    </ligand>
</feature>
<feature type="sequence conflict" description="In Ref. 1; AAA22999." evidence="4" ref="1">
    <original>D</original>
    <variation>H</variation>
    <location>
        <position position="121"/>
    </location>
</feature>
<feature type="sequence conflict" description="In Ref. 1; AAA22999." evidence="4" ref="1">
    <original>D</original>
    <variation>I</variation>
    <location>
        <position position="131"/>
    </location>
</feature>
<feature type="sequence conflict" description="In Ref. 1; AAA22999." evidence="4" ref="1">
    <original>LP</original>
    <variation>H</variation>
    <location>
        <begin position="174"/>
        <end position="175"/>
    </location>
</feature>
<feature type="sequence conflict" description="In Ref. 1; AAA22999." evidence="4" ref="1">
    <original>L</original>
    <variation>V</variation>
    <location>
        <position position="186"/>
    </location>
</feature>
<keyword id="KW-0067">ATP-binding</keyword>
<keyword id="KW-0963">Cytoplasm</keyword>
<keyword id="KW-0227">DNA damage</keyword>
<keyword id="KW-0233">DNA recombination</keyword>
<keyword id="KW-0234">DNA repair</keyword>
<keyword id="KW-0238">DNA-binding</keyword>
<keyword id="KW-0547">Nucleotide-binding</keyword>
<keyword id="KW-1185">Reference proteome</keyword>
<keyword id="KW-0742">SOS response</keyword>
<proteinExistence type="evidence at transcript level"/>
<gene>
    <name evidence="1" type="primary">recA</name>
    <name type="ordered locus">BAB1_1224</name>
</gene>
<dbReference type="EMBL" id="L00679">
    <property type="protein sequence ID" value="AAA22999.1"/>
    <property type="molecule type" value="Genomic_DNA"/>
</dbReference>
<dbReference type="EMBL" id="AM040264">
    <property type="protein sequence ID" value="CAJ11180.1"/>
    <property type="molecule type" value="Genomic_DNA"/>
</dbReference>
<dbReference type="PIR" id="I40347">
    <property type="entry name" value="I40347"/>
</dbReference>
<dbReference type="RefSeq" id="WP_002964332.1">
    <property type="nucleotide sequence ID" value="NZ_KN046823.1"/>
</dbReference>
<dbReference type="SMR" id="Q2YRU7"/>
<dbReference type="STRING" id="359391.BAB1_1224"/>
<dbReference type="GeneID" id="97533554"/>
<dbReference type="KEGG" id="bmf:BAB1_1224"/>
<dbReference type="PATRIC" id="fig|359391.11.peg.123"/>
<dbReference type="HOGENOM" id="CLU_040469_3_2_5"/>
<dbReference type="PRO" id="PR:Q2YRU7"/>
<dbReference type="Proteomes" id="UP000002719">
    <property type="component" value="Chromosome I"/>
</dbReference>
<dbReference type="GO" id="GO:0005829">
    <property type="term" value="C:cytosol"/>
    <property type="evidence" value="ECO:0007669"/>
    <property type="project" value="TreeGrafter"/>
</dbReference>
<dbReference type="GO" id="GO:0005524">
    <property type="term" value="F:ATP binding"/>
    <property type="evidence" value="ECO:0007669"/>
    <property type="project" value="UniProtKB-UniRule"/>
</dbReference>
<dbReference type="GO" id="GO:0016887">
    <property type="term" value="F:ATP hydrolysis activity"/>
    <property type="evidence" value="ECO:0007669"/>
    <property type="project" value="InterPro"/>
</dbReference>
<dbReference type="GO" id="GO:0140664">
    <property type="term" value="F:ATP-dependent DNA damage sensor activity"/>
    <property type="evidence" value="ECO:0007669"/>
    <property type="project" value="InterPro"/>
</dbReference>
<dbReference type="GO" id="GO:0003684">
    <property type="term" value="F:damaged DNA binding"/>
    <property type="evidence" value="ECO:0007669"/>
    <property type="project" value="UniProtKB-UniRule"/>
</dbReference>
<dbReference type="GO" id="GO:0003697">
    <property type="term" value="F:single-stranded DNA binding"/>
    <property type="evidence" value="ECO:0007669"/>
    <property type="project" value="UniProtKB-UniRule"/>
</dbReference>
<dbReference type="GO" id="GO:0006310">
    <property type="term" value="P:DNA recombination"/>
    <property type="evidence" value="ECO:0007669"/>
    <property type="project" value="UniProtKB-UniRule"/>
</dbReference>
<dbReference type="GO" id="GO:0006281">
    <property type="term" value="P:DNA repair"/>
    <property type="evidence" value="ECO:0007669"/>
    <property type="project" value="UniProtKB-UniRule"/>
</dbReference>
<dbReference type="GO" id="GO:0009432">
    <property type="term" value="P:SOS response"/>
    <property type="evidence" value="ECO:0007669"/>
    <property type="project" value="UniProtKB-UniRule"/>
</dbReference>
<dbReference type="CDD" id="cd00983">
    <property type="entry name" value="RecA"/>
    <property type="match status" value="1"/>
</dbReference>
<dbReference type="FunFam" id="3.40.50.300:FF:000087">
    <property type="entry name" value="Recombinase RecA"/>
    <property type="match status" value="1"/>
</dbReference>
<dbReference type="Gene3D" id="3.40.50.300">
    <property type="entry name" value="P-loop containing nucleotide triphosphate hydrolases"/>
    <property type="match status" value="1"/>
</dbReference>
<dbReference type="HAMAP" id="MF_00268">
    <property type="entry name" value="RecA"/>
    <property type="match status" value="1"/>
</dbReference>
<dbReference type="InterPro" id="IPR003593">
    <property type="entry name" value="AAA+_ATPase"/>
</dbReference>
<dbReference type="InterPro" id="IPR013765">
    <property type="entry name" value="DNA_recomb/repair_RecA"/>
</dbReference>
<dbReference type="InterPro" id="IPR020584">
    <property type="entry name" value="DNA_recomb/repair_RecA_CS"/>
</dbReference>
<dbReference type="InterPro" id="IPR027417">
    <property type="entry name" value="P-loop_NTPase"/>
</dbReference>
<dbReference type="InterPro" id="IPR049261">
    <property type="entry name" value="RecA-like_C"/>
</dbReference>
<dbReference type="InterPro" id="IPR049428">
    <property type="entry name" value="RecA-like_N"/>
</dbReference>
<dbReference type="InterPro" id="IPR020588">
    <property type="entry name" value="RecA_ATP-bd"/>
</dbReference>
<dbReference type="InterPro" id="IPR023400">
    <property type="entry name" value="RecA_C_sf"/>
</dbReference>
<dbReference type="InterPro" id="IPR020587">
    <property type="entry name" value="RecA_monomer-monomer_interface"/>
</dbReference>
<dbReference type="NCBIfam" id="TIGR02012">
    <property type="entry name" value="tigrfam_recA"/>
    <property type="match status" value="1"/>
</dbReference>
<dbReference type="PANTHER" id="PTHR45900:SF1">
    <property type="entry name" value="MITOCHONDRIAL DNA REPAIR PROTEIN RECA HOMOLOG-RELATED"/>
    <property type="match status" value="1"/>
</dbReference>
<dbReference type="PANTHER" id="PTHR45900">
    <property type="entry name" value="RECA"/>
    <property type="match status" value="1"/>
</dbReference>
<dbReference type="Pfam" id="PF00154">
    <property type="entry name" value="RecA"/>
    <property type="match status" value="1"/>
</dbReference>
<dbReference type="Pfam" id="PF21096">
    <property type="entry name" value="RecA_C"/>
    <property type="match status" value="1"/>
</dbReference>
<dbReference type="PRINTS" id="PR00142">
    <property type="entry name" value="RECA"/>
</dbReference>
<dbReference type="SMART" id="SM00382">
    <property type="entry name" value="AAA"/>
    <property type="match status" value="1"/>
</dbReference>
<dbReference type="SUPFAM" id="SSF52540">
    <property type="entry name" value="P-loop containing nucleoside triphosphate hydrolases"/>
    <property type="match status" value="1"/>
</dbReference>
<dbReference type="SUPFAM" id="SSF54752">
    <property type="entry name" value="RecA protein, C-terminal domain"/>
    <property type="match status" value="1"/>
</dbReference>
<dbReference type="PROSITE" id="PS00321">
    <property type="entry name" value="RECA_1"/>
    <property type="match status" value="1"/>
</dbReference>
<dbReference type="PROSITE" id="PS50162">
    <property type="entry name" value="RECA_2"/>
    <property type="match status" value="1"/>
</dbReference>
<dbReference type="PROSITE" id="PS50163">
    <property type="entry name" value="RECA_3"/>
    <property type="match status" value="1"/>
</dbReference>
<accession>Q2YRU7</accession>
<accession>Q04761</accession>
<accession>Q57CT9</accession>
<reference key="1">
    <citation type="journal article" date="1993" name="Microb. Pathog.">
        <title>Construction of a Brucella abortus RecA mutant and its survival in mice.</title>
        <authorList>
            <person name="Tatum F.M."/>
            <person name="Morfitt D.C."/>
            <person name="Halling S.M."/>
        </authorList>
    </citation>
    <scope>NUCLEOTIDE SEQUENCE [GENOMIC DNA]</scope>
    <scope>FUNCTION</scope>
    <scope>DISRUPTION PHENOTYPE</scope>
    <source>
        <strain>2308</strain>
    </source>
</reference>
<reference key="2">
    <citation type="journal article" date="2005" name="Infect. Immun.">
        <title>Whole-genome analyses of speciation events in pathogenic Brucellae.</title>
        <authorList>
            <person name="Chain P.S."/>
            <person name="Comerci D.J."/>
            <person name="Tolmasky M.E."/>
            <person name="Larimer F.W."/>
            <person name="Malfatti S.A."/>
            <person name="Vergez L.M."/>
            <person name="Aguero F."/>
            <person name="Land M.L."/>
            <person name="Ugalde R.A."/>
            <person name="Garcia E."/>
        </authorList>
    </citation>
    <scope>NUCLEOTIDE SEQUENCE [LARGE SCALE GENOMIC DNA]</scope>
    <source>
        <strain>2308</strain>
    </source>
</reference>
<reference key="3">
    <citation type="journal article" date="2006" name="J. Bacteriol.">
        <title>RecA and RadA proteins of Brucella abortus do not perform overlapping protective DNA repair functions following oxidative burst.</title>
        <authorList>
            <person name="Roux C.M."/>
            <person name="Booth N.J."/>
            <person name="Bellaire B.H."/>
            <person name="Gee J.M."/>
            <person name="Roop R.M. II"/>
            <person name="Kovach M.E."/>
            <person name="Tsolis R.M."/>
            <person name="Elzer P.H."/>
            <person name="Ennis D.G."/>
        </authorList>
    </citation>
    <scope>FUNCTION</scope>
    <scope>INDUCTION</scope>
    <scope>DISRUPTION PHENOTYPE</scope>
    <source>
        <strain>2308</strain>
    </source>
</reference>
<comment type="function">
    <text evidence="1 5">Can catalyze the hydrolysis of ATP in the presence of single-stranded DNA, the ATP-dependent uptake of single-stranded DNA by duplex DNA, and the ATP-dependent hybridization of homologous single-stranded DNAs (By similarity). Interacts with LexA causing LexA activation and leading to its autocatalytic cleavage (PubMed:16816190). High basal expression of RecA may be important in slowly-dividing Brucella for intracellular survival in its hostile host (PubMed:16816190).</text>
</comment>
<comment type="function">
    <text evidence="2 3">Confers methyl methanesulfonate (MMS) resistance to an E.coli recA deletion mutant (PubMed:8321120). This protein is constitutively activated; its expression in an E.coli recA deletion leads to constitutive expression from a recA reporter gene. Presumably it constitutively activates LexA autocleavage, but no data was published (PubMed:16816190).</text>
</comment>
<comment type="subcellular location">
    <subcellularLocation>
        <location evidence="1">Cytoplasm</location>
    </subcellularLocation>
</comment>
<comment type="induction">
    <text evidence="2">Constitutively expressed at a high level with 2-fold further induction by mitomycin C treatment. Positively autoregulated.</text>
</comment>
<comment type="disruption phenotype">
    <text evidence="2 3">Greatly increased sensitivity to MMS, decreased bacterial load in BALB/c mice, but bacteria still persist 100 days after peritoneal injection (PubMed:8321120). Increased sensitivity to UV light (but considerably less than expected compared to E.coli), hypersensitivity to MMS, slightly increased sensitivity to H(2)O(2). Loss of mitomycin C-induced expression from a recA promoter. 4-fold less survival in mouse macrophages, where the bacteria has to survive an extremely hostile environment (PubMed:16816190).</text>
</comment>
<comment type="similarity">
    <text evidence="1">Belongs to the RecA family.</text>
</comment>
<protein>
    <recommendedName>
        <fullName evidence="1">Protein RecA</fullName>
    </recommendedName>
    <alternativeName>
        <fullName evidence="1">Recombinase A</fullName>
    </alternativeName>
</protein>
<evidence type="ECO:0000255" key="1">
    <source>
        <dbReference type="HAMAP-Rule" id="MF_00268"/>
    </source>
</evidence>
<evidence type="ECO:0000269" key="2">
    <source>
    </source>
</evidence>
<evidence type="ECO:0000269" key="3">
    <source>
    </source>
</evidence>
<evidence type="ECO:0000305" key="4"/>
<evidence type="ECO:0000305" key="5">
    <source>
    </source>
</evidence>